<dbReference type="EMBL" id="AF250878">
    <property type="protein sequence ID" value="AAF69949.1"/>
    <property type="molecule type" value="Genomic_DNA"/>
</dbReference>
<dbReference type="EMBL" id="AL513383">
    <property type="protein sequence ID" value="CAD09857.1"/>
    <property type="molecule type" value="Genomic_DNA"/>
</dbReference>
<dbReference type="RefSeq" id="NP_058324.1">
    <property type="nucleotide sequence ID" value="NC_002305.1"/>
</dbReference>
<dbReference type="RefSeq" id="NP_569463.1">
    <property type="nucleotide sequence ID" value="NC_003384.1"/>
</dbReference>
<dbReference type="RefSeq" id="WP_001281327.1">
    <property type="nucleotide sequence ID" value="NZ_PZMA01000029.1"/>
</dbReference>
<dbReference type="SMR" id="Q9L5N1"/>
<dbReference type="KEGG" id="sty:HCM1.279bc"/>
<dbReference type="PATRIC" id="fig|220341.7.peg.5289"/>
<dbReference type="HOGENOM" id="CLU_182912_1_0_6"/>
<dbReference type="PRO" id="PR:Q9L5N1"/>
<dbReference type="Proteomes" id="UP000000541">
    <property type="component" value="Plasmid pHCM1"/>
</dbReference>
<dbReference type="Gene3D" id="3.30.160.130">
    <property type="entry name" value="ykff protein like domains"/>
    <property type="match status" value="1"/>
</dbReference>
<dbReference type="InterPro" id="IPR009253">
    <property type="entry name" value="DUF905"/>
</dbReference>
<dbReference type="InterPro" id="IPR038612">
    <property type="entry name" value="YkfF-like_sf"/>
</dbReference>
<dbReference type="Pfam" id="PF06006">
    <property type="entry name" value="DUF905"/>
    <property type="match status" value="1"/>
</dbReference>
<dbReference type="SUPFAM" id="SSF54786">
    <property type="entry name" value="YcfA/nrd intein domain"/>
    <property type="match status" value="1"/>
</dbReference>
<protein>
    <recommendedName>
        <fullName>UPF0401 protein YubL</fullName>
    </recommendedName>
</protein>
<sequence length="78" mass="8775">MSDLFSSESPVTLAQARTVAAGYQNVFIENLQPAGHFQIVIRDHRDHDSQLVWRNWNYESGANDALNSYLQSHGLKAS</sequence>
<accession>Q9L5N1</accession>
<accession>Q7AQQ8</accession>
<comment type="similarity">
    <text evidence="1">Belongs to the UPF0401 family.</text>
</comment>
<reference key="1">
    <citation type="journal article" date="2000" name="Nucleic Acids Res.">
        <title>The complete DNA sequence and analysis of R27, a large IncHI plasmid from Salmonella typhi that is temperature sensitive for transfer.</title>
        <authorList>
            <person name="Sherburne C.K."/>
            <person name="Lawley T.D."/>
            <person name="Gilmour M.W."/>
            <person name="Blattner F.R."/>
            <person name="Burland V."/>
            <person name="Grotbeck E."/>
            <person name="Rose D.J."/>
            <person name="Taylor D.E."/>
        </authorList>
    </citation>
    <scope>NUCLEOTIDE SEQUENCE [GENOMIC DNA]</scope>
    <source>
        <plasmid>IncHI1 R27</plasmid>
    </source>
</reference>
<reference key="2">
    <citation type="journal article" date="2001" name="Nature">
        <title>Complete genome sequence of a multiple drug resistant Salmonella enterica serovar Typhi CT18.</title>
        <authorList>
            <person name="Parkhill J."/>
            <person name="Dougan G."/>
            <person name="James K.D."/>
            <person name="Thomson N.R."/>
            <person name="Pickard D."/>
            <person name="Wain J."/>
            <person name="Churcher C.M."/>
            <person name="Mungall K.L."/>
            <person name="Bentley S.D."/>
            <person name="Holden M.T.G."/>
            <person name="Sebaihia M."/>
            <person name="Baker S."/>
            <person name="Basham D."/>
            <person name="Brooks K."/>
            <person name="Chillingworth T."/>
            <person name="Connerton P."/>
            <person name="Cronin A."/>
            <person name="Davis P."/>
            <person name="Davies R.M."/>
            <person name="Dowd L."/>
            <person name="White N."/>
            <person name="Farrar J."/>
            <person name="Feltwell T."/>
            <person name="Hamlin N."/>
            <person name="Haque A."/>
            <person name="Hien T.T."/>
            <person name="Holroyd S."/>
            <person name="Jagels K."/>
            <person name="Krogh A."/>
            <person name="Larsen T.S."/>
            <person name="Leather S."/>
            <person name="Moule S."/>
            <person name="O'Gaora P."/>
            <person name="Parry C."/>
            <person name="Quail M.A."/>
            <person name="Rutherford K.M."/>
            <person name="Simmonds M."/>
            <person name="Skelton J."/>
            <person name="Stevens K."/>
            <person name="Whitehead S."/>
            <person name="Barrell B.G."/>
        </authorList>
    </citation>
    <scope>NUCLEOTIDE SEQUENCE [LARGE SCALE GENOMIC DNA]</scope>
    <source>
        <strain>CT18</strain>
        <plasmid>pHCM1</plasmid>
    </source>
</reference>
<proteinExistence type="inferred from homology"/>
<keyword id="KW-0614">Plasmid</keyword>
<organism>
    <name type="scientific">Salmonella typhi</name>
    <dbReference type="NCBI Taxonomy" id="90370"/>
    <lineage>
        <taxon>Bacteria</taxon>
        <taxon>Pseudomonadati</taxon>
        <taxon>Pseudomonadota</taxon>
        <taxon>Gammaproteobacteria</taxon>
        <taxon>Enterobacterales</taxon>
        <taxon>Enterobacteriaceae</taxon>
        <taxon>Salmonella</taxon>
    </lineage>
</organism>
<feature type="chain" id="PRO_0000268752" description="UPF0401 protein YubL">
    <location>
        <begin position="1"/>
        <end position="78"/>
    </location>
</feature>
<gene>
    <name type="primary">yubL</name>
    <name type="synonym">HCM1.279bc</name>
    <name type="synonym">R0111</name>
    <name type="ordered locus">HCM1.279.2c</name>
</gene>
<geneLocation type="plasmid">
    <name>IncHI1 R27</name>
</geneLocation>
<geneLocation type="plasmid">
    <name>pHCM1</name>
</geneLocation>
<name>YUBL_SALTI</name>
<evidence type="ECO:0000305" key="1"/>